<name>DXR2_BACHK</name>
<protein>
    <recommendedName>
        <fullName evidence="1">1-deoxy-D-xylulose 5-phosphate reductoisomerase 2</fullName>
        <shortName evidence="1">DXP reductoisomerase 2</shortName>
        <ecNumber evidence="1">1.1.1.267</ecNumber>
    </recommendedName>
    <alternativeName>
        <fullName evidence="1">1-deoxyxylulose-5-phosphate reductoisomerase 2</fullName>
    </alternativeName>
    <alternativeName>
        <fullName evidence="1">2-C-methyl-D-erythritol 4-phosphate synthase 2</fullName>
    </alternativeName>
</protein>
<keyword id="KW-0414">Isoprene biosynthesis</keyword>
<keyword id="KW-0464">Manganese</keyword>
<keyword id="KW-0479">Metal-binding</keyword>
<keyword id="KW-0521">NADP</keyword>
<keyword id="KW-0560">Oxidoreductase</keyword>
<accession>Q6HEZ4</accession>
<proteinExistence type="inferred from homology"/>
<gene>
    <name evidence="1" type="primary">dxr2</name>
    <name type="ordered locus">BT9727_3562</name>
</gene>
<comment type="function">
    <text evidence="1">Catalyzes the NADPH-dependent rearrangement and reduction of 1-deoxy-D-xylulose-5-phosphate (DXP) to 2-C-methyl-D-erythritol 4-phosphate (MEP).</text>
</comment>
<comment type="catalytic activity">
    <reaction evidence="1">
        <text>2-C-methyl-D-erythritol 4-phosphate + NADP(+) = 1-deoxy-D-xylulose 5-phosphate + NADPH + H(+)</text>
        <dbReference type="Rhea" id="RHEA:13717"/>
        <dbReference type="ChEBI" id="CHEBI:15378"/>
        <dbReference type="ChEBI" id="CHEBI:57783"/>
        <dbReference type="ChEBI" id="CHEBI:57792"/>
        <dbReference type="ChEBI" id="CHEBI:58262"/>
        <dbReference type="ChEBI" id="CHEBI:58349"/>
        <dbReference type="EC" id="1.1.1.267"/>
    </reaction>
    <physiologicalReaction direction="right-to-left" evidence="1">
        <dbReference type="Rhea" id="RHEA:13719"/>
    </physiologicalReaction>
</comment>
<comment type="cofactor">
    <cofactor evidence="1">
        <name>Mg(2+)</name>
        <dbReference type="ChEBI" id="CHEBI:18420"/>
    </cofactor>
    <cofactor evidence="1">
        <name>Mn(2+)</name>
        <dbReference type="ChEBI" id="CHEBI:29035"/>
    </cofactor>
</comment>
<comment type="pathway">
    <text evidence="1">Isoprenoid biosynthesis; isopentenyl diphosphate biosynthesis via DXP pathway; isopentenyl diphosphate from 1-deoxy-D-xylulose 5-phosphate: step 1/6.</text>
</comment>
<comment type="similarity">
    <text evidence="1">Belongs to the DXR family.</text>
</comment>
<feature type="chain" id="PRO_0000163612" description="1-deoxy-D-xylulose 5-phosphate reductoisomerase 2">
    <location>
        <begin position="1"/>
        <end position="380"/>
    </location>
</feature>
<feature type="binding site" evidence="1">
    <location>
        <position position="10"/>
    </location>
    <ligand>
        <name>NADPH</name>
        <dbReference type="ChEBI" id="CHEBI:57783"/>
    </ligand>
</feature>
<feature type="binding site" evidence="1">
    <location>
        <position position="11"/>
    </location>
    <ligand>
        <name>NADPH</name>
        <dbReference type="ChEBI" id="CHEBI:57783"/>
    </ligand>
</feature>
<feature type="binding site" evidence="1">
    <location>
        <position position="12"/>
    </location>
    <ligand>
        <name>NADPH</name>
        <dbReference type="ChEBI" id="CHEBI:57783"/>
    </ligand>
</feature>
<feature type="binding site" evidence="1">
    <location>
        <position position="13"/>
    </location>
    <ligand>
        <name>NADPH</name>
        <dbReference type="ChEBI" id="CHEBI:57783"/>
    </ligand>
</feature>
<feature type="binding site" evidence="1">
    <location>
        <position position="36"/>
    </location>
    <ligand>
        <name>NADPH</name>
        <dbReference type="ChEBI" id="CHEBI:57783"/>
    </ligand>
</feature>
<feature type="binding site" evidence="1">
    <location>
        <position position="37"/>
    </location>
    <ligand>
        <name>NADPH</name>
        <dbReference type="ChEBI" id="CHEBI:57783"/>
    </ligand>
</feature>
<feature type="binding site" evidence="1">
    <location>
        <position position="38"/>
    </location>
    <ligand>
        <name>NADPH</name>
        <dbReference type="ChEBI" id="CHEBI:57783"/>
    </ligand>
</feature>
<feature type="binding site" evidence="1">
    <location>
        <position position="120"/>
    </location>
    <ligand>
        <name>NADPH</name>
        <dbReference type="ChEBI" id="CHEBI:57783"/>
    </ligand>
</feature>
<feature type="binding site" evidence="1">
    <location>
        <position position="121"/>
    </location>
    <ligand>
        <name>1-deoxy-D-xylulose 5-phosphate</name>
        <dbReference type="ChEBI" id="CHEBI:57792"/>
    </ligand>
</feature>
<feature type="binding site" evidence="1">
    <location>
        <position position="122"/>
    </location>
    <ligand>
        <name>NADPH</name>
        <dbReference type="ChEBI" id="CHEBI:57783"/>
    </ligand>
</feature>
<feature type="binding site" evidence="1">
    <location>
        <position position="146"/>
    </location>
    <ligand>
        <name>Mn(2+)</name>
        <dbReference type="ChEBI" id="CHEBI:29035"/>
    </ligand>
</feature>
<feature type="binding site" evidence="1">
    <location>
        <position position="147"/>
    </location>
    <ligand>
        <name>1-deoxy-D-xylulose 5-phosphate</name>
        <dbReference type="ChEBI" id="CHEBI:57792"/>
    </ligand>
</feature>
<feature type="binding site" evidence="1">
    <location>
        <position position="148"/>
    </location>
    <ligand>
        <name>1-deoxy-D-xylulose 5-phosphate</name>
        <dbReference type="ChEBI" id="CHEBI:57792"/>
    </ligand>
</feature>
<feature type="binding site" evidence="1">
    <location>
        <position position="148"/>
    </location>
    <ligand>
        <name>Mn(2+)</name>
        <dbReference type="ChEBI" id="CHEBI:29035"/>
    </ligand>
</feature>
<feature type="binding site" evidence="1">
    <location>
        <position position="172"/>
    </location>
    <ligand>
        <name>1-deoxy-D-xylulose 5-phosphate</name>
        <dbReference type="ChEBI" id="CHEBI:57792"/>
    </ligand>
</feature>
<feature type="binding site" evidence="1">
    <location>
        <position position="195"/>
    </location>
    <ligand>
        <name>1-deoxy-D-xylulose 5-phosphate</name>
        <dbReference type="ChEBI" id="CHEBI:57792"/>
    </ligand>
</feature>
<feature type="binding site" evidence="1">
    <location>
        <position position="201"/>
    </location>
    <ligand>
        <name>NADPH</name>
        <dbReference type="ChEBI" id="CHEBI:57783"/>
    </ligand>
</feature>
<feature type="binding site" evidence="1">
    <location>
        <position position="208"/>
    </location>
    <ligand>
        <name>1-deoxy-D-xylulose 5-phosphate</name>
        <dbReference type="ChEBI" id="CHEBI:57792"/>
    </ligand>
</feature>
<feature type="binding site" evidence="1">
    <location>
        <position position="213"/>
    </location>
    <ligand>
        <name>1-deoxy-D-xylulose 5-phosphate</name>
        <dbReference type="ChEBI" id="CHEBI:57792"/>
    </ligand>
</feature>
<feature type="binding site" evidence="1">
    <location>
        <position position="214"/>
    </location>
    <ligand>
        <name>1-deoxy-D-xylulose 5-phosphate</name>
        <dbReference type="ChEBI" id="CHEBI:57792"/>
    </ligand>
</feature>
<feature type="binding site" evidence="1">
    <location>
        <position position="217"/>
    </location>
    <ligand>
        <name>1-deoxy-D-xylulose 5-phosphate</name>
        <dbReference type="ChEBI" id="CHEBI:57792"/>
    </ligand>
</feature>
<feature type="binding site" evidence="1">
    <location>
        <position position="217"/>
    </location>
    <ligand>
        <name>Mn(2+)</name>
        <dbReference type="ChEBI" id="CHEBI:29035"/>
    </ligand>
</feature>
<evidence type="ECO:0000255" key="1">
    <source>
        <dbReference type="HAMAP-Rule" id="MF_00183"/>
    </source>
</evidence>
<reference key="1">
    <citation type="journal article" date="2006" name="J. Bacteriol.">
        <title>Pathogenomic sequence analysis of Bacillus cereus and Bacillus thuringiensis isolates closely related to Bacillus anthracis.</title>
        <authorList>
            <person name="Han C.S."/>
            <person name="Xie G."/>
            <person name="Challacombe J.F."/>
            <person name="Altherr M.R."/>
            <person name="Bhotika S.S."/>
            <person name="Bruce D."/>
            <person name="Campbell C.S."/>
            <person name="Campbell M.L."/>
            <person name="Chen J."/>
            <person name="Chertkov O."/>
            <person name="Cleland C."/>
            <person name="Dimitrijevic M."/>
            <person name="Doggett N.A."/>
            <person name="Fawcett J.J."/>
            <person name="Glavina T."/>
            <person name="Goodwin L.A."/>
            <person name="Hill K.K."/>
            <person name="Hitchcock P."/>
            <person name="Jackson P.J."/>
            <person name="Keim P."/>
            <person name="Kewalramani A.R."/>
            <person name="Longmire J."/>
            <person name="Lucas S."/>
            <person name="Malfatti S."/>
            <person name="McMurry K."/>
            <person name="Meincke L.J."/>
            <person name="Misra M."/>
            <person name="Moseman B.L."/>
            <person name="Mundt M."/>
            <person name="Munk A.C."/>
            <person name="Okinaka R.T."/>
            <person name="Parson-Quintana B."/>
            <person name="Reilly L.P."/>
            <person name="Richardson P."/>
            <person name="Robinson D.L."/>
            <person name="Rubin E."/>
            <person name="Saunders E."/>
            <person name="Tapia R."/>
            <person name="Tesmer J.G."/>
            <person name="Thayer N."/>
            <person name="Thompson L.S."/>
            <person name="Tice H."/>
            <person name="Ticknor L.O."/>
            <person name="Wills P.L."/>
            <person name="Brettin T.S."/>
            <person name="Gilna P."/>
        </authorList>
    </citation>
    <scope>NUCLEOTIDE SEQUENCE [LARGE SCALE GENOMIC DNA]</scope>
    <source>
        <strain>97-27</strain>
    </source>
</reference>
<dbReference type="EC" id="1.1.1.267" evidence="1"/>
<dbReference type="EMBL" id="AE017355">
    <property type="protein sequence ID" value="AAT60596.1"/>
    <property type="molecule type" value="Genomic_DNA"/>
</dbReference>
<dbReference type="RefSeq" id="YP_037882.1">
    <property type="nucleotide sequence ID" value="NC_005957.1"/>
</dbReference>
<dbReference type="SMR" id="Q6HEZ4"/>
<dbReference type="KEGG" id="btk:BT9727_3562"/>
<dbReference type="PATRIC" id="fig|281309.8.peg.3800"/>
<dbReference type="HOGENOM" id="CLU_035714_4_0_9"/>
<dbReference type="UniPathway" id="UPA00056">
    <property type="reaction ID" value="UER00092"/>
</dbReference>
<dbReference type="Proteomes" id="UP000001301">
    <property type="component" value="Chromosome"/>
</dbReference>
<dbReference type="GO" id="GO:0030604">
    <property type="term" value="F:1-deoxy-D-xylulose-5-phosphate reductoisomerase activity"/>
    <property type="evidence" value="ECO:0007669"/>
    <property type="project" value="UniProtKB-UniRule"/>
</dbReference>
<dbReference type="GO" id="GO:0030145">
    <property type="term" value="F:manganese ion binding"/>
    <property type="evidence" value="ECO:0007669"/>
    <property type="project" value="TreeGrafter"/>
</dbReference>
<dbReference type="GO" id="GO:0070402">
    <property type="term" value="F:NADPH binding"/>
    <property type="evidence" value="ECO:0007669"/>
    <property type="project" value="InterPro"/>
</dbReference>
<dbReference type="GO" id="GO:0051484">
    <property type="term" value="P:isopentenyl diphosphate biosynthetic process, methylerythritol 4-phosphate pathway involved in terpenoid biosynthetic process"/>
    <property type="evidence" value="ECO:0007669"/>
    <property type="project" value="TreeGrafter"/>
</dbReference>
<dbReference type="FunFam" id="1.10.1740.10:FF:000005">
    <property type="entry name" value="1-deoxy-D-xylulose 5-phosphate reductoisomerase"/>
    <property type="match status" value="1"/>
</dbReference>
<dbReference type="FunFam" id="3.40.50.720:FF:000045">
    <property type="entry name" value="1-deoxy-D-xylulose 5-phosphate reductoisomerase"/>
    <property type="match status" value="1"/>
</dbReference>
<dbReference type="Gene3D" id="1.10.1740.10">
    <property type="match status" value="1"/>
</dbReference>
<dbReference type="Gene3D" id="3.40.50.720">
    <property type="entry name" value="NAD(P)-binding Rossmann-like Domain"/>
    <property type="match status" value="1"/>
</dbReference>
<dbReference type="HAMAP" id="MF_00183">
    <property type="entry name" value="DXP_reductoisom"/>
    <property type="match status" value="1"/>
</dbReference>
<dbReference type="InterPro" id="IPR003821">
    <property type="entry name" value="DXP_reductoisomerase"/>
</dbReference>
<dbReference type="InterPro" id="IPR013644">
    <property type="entry name" value="DXP_reductoisomerase_C"/>
</dbReference>
<dbReference type="InterPro" id="IPR013512">
    <property type="entry name" value="DXP_reductoisomerase_N"/>
</dbReference>
<dbReference type="InterPro" id="IPR026877">
    <property type="entry name" value="DXPR_C"/>
</dbReference>
<dbReference type="InterPro" id="IPR036169">
    <property type="entry name" value="DXPR_C_sf"/>
</dbReference>
<dbReference type="InterPro" id="IPR036291">
    <property type="entry name" value="NAD(P)-bd_dom_sf"/>
</dbReference>
<dbReference type="NCBIfam" id="TIGR00243">
    <property type="entry name" value="Dxr"/>
    <property type="match status" value="1"/>
</dbReference>
<dbReference type="NCBIfam" id="NF009114">
    <property type="entry name" value="PRK12464.1"/>
    <property type="match status" value="1"/>
</dbReference>
<dbReference type="PANTHER" id="PTHR30525">
    <property type="entry name" value="1-DEOXY-D-XYLULOSE 5-PHOSPHATE REDUCTOISOMERASE"/>
    <property type="match status" value="1"/>
</dbReference>
<dbReference type="PANTHER" id="PTHR30525:SF0">
    <property type="entry name" value="1-DEOXY-D-XYLULOSE 5-PHOSPHATE REDUCTOISOMERASE, CHLOROPLASTIC"/>
    <property type="match status" value="1"/>
</dbReference>
<dbReference type="Pfam" id="PF08436">
    <property type="entry name" value="DXP_redisom_C"/>
    <property type="match status" value="1"/>
</dbReference>
<dbReference type="Pfam" id="PF02670">
    <property type="entry name" value="DXP_reductoisom"/>
    <property type="match status" value="1"/>
</dbReference>
<dbReference type="Pfam" id="PF13288">
    <property type="entry name" value="DXPR_C"/>
    <property type="match status" value="1"/>
</dbReference>
<dbReference type="PIRSF" id="PIRSF006205">
    <property type="entry name" value="Dxp_reductismrs"/>
    <property type="match status" value="1"/>
</dbReference>
<dbReference type="SUPFAM" id="SSF69055">
    <property type="entry name" value="1-deoxy-D-xylulose-5-phosphate reductoisomerase, C-terminal domain"/>
    <property type="match status" value="1"/>
</dbReference>
<dbReference type="SUPFAM" id="SSF55347">
    <property type="entry name" value="Glyceraldehyde-3-phosphate dehydrogenase-like, C-terminal domain"/>
    <property type="match status" value="1"/>
</dbReference>
<dbReference type="SUPFAM" id="SSF51735">
    <property type="entry name" value="NAD(P)-binding Rossmann-fold domains"/>
    <property type="match status" value="1"/>
</dbReference>
<organism>
    <name type="scientific">Bacillus thuringiensis subsp. konkukian (strain 97-27)</name>
    <dbReference type="NCBI Taxonomy" id="281309"/>
    <lineage>
        <taxon>Bacteria</taxon>
        <taxon>Bacillati</taxon>
        <taxon>Bacillota</taxon>
        <taxon>Bacilli</taxon>
        <taxon>Bacillales</taxon>
        <taxon>Bacillaceae</taxon>
        <taxon>Bacillus</taxon>
        <taxon>Bacillus cereus group</taxon>
    </lineage>
</organism>
<sequence length="380" mass="42266">MKNISLLGASGSIGTQTLDVLRSHPDQFRLVAFSVGKNIDYAVKVIQEFSPQIVSVQREEDVLKLQAVSGNTKIVYGNEGLLEVALHPDAEIVVNAVVGSVGLLPTLRAIEAKKTIGIANKETLVTAGHLVMEAARKHNVSLLPVDSEHSAIFQCLNGENEKRISRLIITASGGSFRDKTRDELHHVTVEDALRHPNWSMGSKITIDSATMMNKGLEVIEAHWLFGIPYEQIDVVLHKESIIHSMVEFEDRSVMAQLGSPDMRVPIQYALTYPDRLPLSDTKQLNLWEIGTLHFEKMNQERFRCLRFAYEAGKAGGSMPAVMNAANEVAVEAFLQKRIGFLTVEDLIEKAMNHHNVIARPSLEEILEIDAATRRFVMEQI</sequence>